<name>LGT_LEGPC</name>
<gene>
    <name evidence="1" type="primary">lgt</name>
    <name type="ordered locus">LPC_3155</name>
</gene>
<reference key="1">
    <citation type="submission" date="2006-11" db="EMBL/GenBank/DDBJ databases">
        <title>Identification and characterization of a new conjugation/ type IVA secretion system (trb/tra) of L. pneumophila Corby localized on a mobile genomic island.</title>
        <authorList>
            <person name="Gloeckner G."/>
            <person name="Albert-Weissenberger C."/>
            <person name="Weinmann E."/>
            <person name="Jacobi S."/>
            <person name="Schunder E."/>
            <person name="Steinert M."/>
            <person name="Buchrieser C."/>
            <person name="Hacker J."/>
            <person name="Heuner K."/>
        </authorList>
    </citation>
    <scope>NUCLEOTIDE SEQUENCE [LARGE SCALE GENOMIC DNA]</scope>
    <source>
        <strain>Corby</strain>
    </source>
</reference>
<sequence length="256" mass="29366">MLTYPNINPIAFSFGPLKVHWYGLMYLIGFIGAWLLGYWRIKHYKLNWNNDQLSDLIFYSALGVILGGRVGYMLFYDFQEFIHHPWVLFKIWEGGMSFHGGLLGVVIAAWLFCRKYGKTFLEVGDFVAPLVPLGLAAGRLGNFINGELWGRATDVPWGMIYPHVDDQPRHPSQLYEFGLEGVALFILIWCYASKPRQQGRVSALFLMGYAICRLIAESFRQPDSQLGFVAFGWLTMGQVLSIPMLLIGIWLWWAKR</sequence>
<comment type="function">
    <text evidence="1">Catalyzes the transfer of the diacylglyceryl group from phosphatidylglycerol to the sulfhydryl group of the N-terminal cysteine of a prolipoprotein, the first step in the formation of mature lipoproteins.</text>
</comment>
<comment type="catalytic activity">
    <reaction evidence="1">
        <text>L-cysteinyl-[prolipoprotein] + a 1,2-diacyl-sn-glycero-3-phospho-(1'-sn-glycerol) = an S-1,2-diacyl-sn-glyceryl-L-cysteinyl-[prolipoprotein] + sn-glycerol 1-phosphate + H(+)</text>
        <dbReference type="Rhea" id="RHEA:56712"/>
        <dbReference type="Rhea" id="RHEA-COMP:14679"/>
        <dbReference type="Rhea" id="RHEA-COMP:14680"/>
        <dbReference type="ChEBI" id="CHEBI:15378"/>
        <dbReference type="ChEBI" id="CHEBI:29950"/>
        <dbReference type="ChEBI" id="CHEBI:57685"/>
        <dbReference type="ChEBI" id="CHEBI:64716"/>
        <dbReference type="ChEBI" id="CHEBI:140658"/>
        <dbReference type="EC" id="2.5.1.145"/>
    </reaction>
</comment>
<comment type="pathway">
    <text evidence="1">Protein modification; lipoprotein biosynthesis (diacylglyceryl transfer).</text>
</comment>
<comment type="subcellular location">
    <subcellularLocation>
        <location evidence="1">Cell inner membrane</location>
        <topology evidence="1">Multi-pass membrane protein</topology>
    </subcellularLocation>
</comment>
<comment type="similarity">
    <text evidence="1">Belongs to the Lgt family.</text>
</comment>
<feature type="chain" id="PRO_1000053449" description="Phosphatidylglycerol--prolipoprotein diacylglyceryl transferase">
    <location>
        <begin position="1"/>
        <end position="256"/>
    </location>
</feature>
<feature type="transmembrane region" description="Helical" evidence="1">
    <location>
        <begin position="19"/>
        <end position="39"/>
    </location>
</feature>
<feature type="transmembrane region" description="Helical" evidence="1">
    <location>
        <begin position="56"/>
        <end position="76"/>
    </location>
</feature>
<feature type="transmembrane region" description="Helical" evidence="1">
    <location>
        <begin position="91"/>
        <end position="111"/>
    </location>
</feature>
<feature type="transmembrane region" description="Helical" evidence="1">
    <location>
        <begin position="231"/>
        <end position="251"/>
    </location>
</feature>
<feature type="binding site" evidence="1">
    <location>
        <position position="139"/>
    </location>
    <ligand>
        <name>a 1,2-diacyl-sn-glycero-3-phospho-(1'-sn-glycerol)</name>
        <dbReference type="ChEBI" id="CHEBI:64716"/>
    </ligand>
</feature>
<evidence type="ECO:0000255" key="1">
    <source>
        <dbReference type="HAMAP-Rule" id="MF_01147"/>
    </source>
</evidence>
<dbReference type="EC" id="2.5.1.145" evidence="1"/>
<dbReference type="EMBL" id="CP000675">
    <property type="protein sequence ID" value="ABQ57042.1"/>
    <property type="molecule type" value="Genomic_DNA"/>
</dbReference>
<dbReference type="RefSeq" id="WP_011947749.1">
    <property type="nucleotide sequence ID" value="NC_009494.2"/>
</dbReference>
<dbReference type="SMR" id="A5II42"/>
<dbReference type="KEGG" id="lpc:LPC_3155"/>
<dbReference type="HOGENOM" id="CLU_013386_1_0_6"/>
<dbReference type="UniPathway" id="UPA00664"/>
<dbReference type="GO" id="GO:0005886">
    <property type="term" value="C:plasma membrane"/>
    <property type="evidence" value="ECO:0007669"/>
    <property type="project" value="UniProtKB-SubCell"/>
</dbReference>
<dbReference type="GO" id="GO:0008961">
    <property type="term" value="F:phosphatidylglycerol-prolipoprotein diacylglyceryl transferase activity"/>
    <property type="evidence" value="ECO:0007669"/>
    <property type="project" value="UniProtKB-UniRule"/>
</dbReference>
<dbReference type="GO" id="GO:0042158">
    <property type="term" value="P:lipoprotein biosynthetic process"/>
    <property type="evidence" value="ECO:0007669"/>
    <property type="project" value="UniProtKB-UniRule"/>
</dbReference>
<dbReference type="HAMAP" id="MF_01147">
    <property type="entry name" value="Lgt"/>
    <property type="match status" value="1"/>
</dbReference>
<dbReference type="InterPro" id="IPR001640">
    <property type="entry name" value="Lgt"/>
</dbReference>
<dbReference type="NCBIfam" id="TIGR00544">
    <property type="entry name" value="lgt"/>
    <property type="match status" value="1"/>
</dbReference>
<dbReference type="PANTHER" id="PTHR30589:SF0">
    <property type="entry name" value="PHOSPHATIDYLGLYCEROL--PROLIPOPROTEIN DIACYLGLYCERYL TRANSFERASE"/>
    <property type="match status" value="1"/>
</dbReference>
<dbReference type="PANTHER" id="PTHR30589">
    <property type="entry name" value="PROLIPOPROTEIN DIACYLGLYCERYL TRANSFERASE"/>
    <property type="match status" value="1"/>
</dbReference>
<dbReference type="Pfam" id="PF01790">
    <property type="entry name" value="LGT"/>
    <property type="match status" value="1"/>
</dbReference>
<dbReference type="PROSITE" id="PS01311">
    <property type="entry name" value="LGT"/>
    <property type="match status" value="1"/>
</dbReference>
<organism>
    <name type="scientific">Legionella pneumophila (strain Corby)</name>
    <dbReference type="NCBI Taxonomy" id="400673"/>
    <lineage>
        <taxon>Bacteria</taxon>
        <taxon>Pseudomonadati</taxon>
        <taxon>Pseudomonadota</taxon>
        <taxon>Gammaproteobacteria</taxon>
        <taxon>Legionellales</taxon>
        <taxon>Legionellaceae</taxon>
        <taxon>Legionella</taxon>
    </lineage>
</organism>
<accession>A5II42</accession>
<keyword id="KW-0997">Cell inner membrane</keyword>
<keyword id="KW-1003">Cell membrane</keyword>
<keyword id="KW-0472">Membrane</keyword>
<keyword id="KW-0808">Transferase</keyword>
<keyword id="KW-0812">Transmembrane</keyword>
<keyword id="KW-1133">Transmembrane helix</keyword>
<proteinExistence type="inferred from homology"/>
<protein>
    <recommendedName>
        <fullName evidence="1">Phosphatidylglycerol--prolipoprotein diacylglyceryl transferase</fullName>
        <ecNumber evidence="1">2.5.1.145</ecNumber>
    </recommendedName>
</protein>